<protein>
    <recommendedName>
        <fullName>mgtA leader peptide</fullName>
    </recommendedName>
    <alternativeName>
        <fullName>Regulatory leader peptide for mgtA</fullName>
    </alternativeName>
</protein>
<evidence type="ECO:0000250" key="1"/>
<evidence type="ECO:0000305" key="2"/>
<proteinExistence type="inferred from homology"/>
<sequence length="17" mass="2123">MEPDPTPLPRRRLKLFR</sequence>
<organism>
    <name type="scientific">Escherichia coli (strain UTI89 / UPEC)</name>
    <dbReference type="NCBI Taxonomy" id="364106"/>
    <lineage>
        <taxon>Bacteria</taxon>
        <taxon>Pseudomonadati</taxon>
        <taxon>Pseudomonadota</taxon>
        <taxon>Gammaproteobacteria</taxon>
        <taxon>Enterobacterales</taxon>
        <taxon>Enterobacteriaceae</taxon>
        <taxon>Escherichia</taxon>
    </lineage>
</organism>
<comment type="function">
    <text evidence="1">Makes mgtA transcription sensitive to intracellular proline levels. Under low levels of proline this protein cannot be fully translated, and a stem loop forms which permits transcription of the downstream mgtA gene (By similarity).</text>
</comment>
<comment type="similarity">
    <text evidence="2">Belongs to the MgtL family.</text>
</comment>
<comment type="sequence caution" evidence="2">
    <conflict type="erroneous initiation">
        <sequence resource="EMBL-CDS" id="ABE10250"/>
    </conflict>
    <text>Extended N-terminus.</text>
</comment>
<keyword id="KW-0428">Leader peptide</keyword>
<name>LPMG_ECOUT</name>
<gene>
    <name type="primary">mgtL</name>
    <name type="ordered locus">UTI89_C4846</name>
</gene>
<feature type="chain" id="PRO_0000403453" description="mgtA leader peptide">
    <location>
        <begin position="1"/>
        <end position="17"/>
    </location>
</feature>
<dbReference type="EMBL" id="CP000243">
    <property type="protein sequence ID" value="ABE10250.1"/>
    <property type="status" value="ALT_INIT"/>
    <property type="molecule type" value="Genomic_DNA"/>
</dbReference>
<dbReference type="RefSeq" id="WP_001387276.1">
    <property type="nucleotide sequence ID" value="NZ_CP064825.1"/>
</dbReference>
<dbReference type="GeneID" id="93777583"/>
<dbReference type="KEGG" id="eci:UTI89_C4846"/>
<dbReference type="HOGENOM" id="CLU_2896927_0_0_6"/>
<dbReference type="Proteomes" id="UP000001952">
    <property type="component" value="Chromosome"/>
</dbReference>
<dbReference type="InterPro" id="IPR031434">
    <property type="entry name" value="MGTL"/>
</dbReference>
<dbReference type="Pfam" id="PF17059">
    <property type="entry name" value="MGTL"/>
    <property type="match status" value="1"/>
</dbReference>
<reference key="1">
    <citation type="journal article" date="2006" name="Proc. Natl. Acad. Sci. U.S.A.">
        <title>Identification of genes subject to positive selection in uropathogenic strains of Escherichia coli: a comparative genomics approach.</title>
        <authorList>
            <person name="Chen S.L."/>
            <person name="Hung C.-S."/>
            <person name="Xu J."/>
            <person name="Reigstad C.S."/>
            <person name="Magrini V."/>
            <person name="Sabo A."/>
            <person name="Blasiar D."/>
            <person name="Bieri T."/>
            <person name="Meyer R.R."/>
            <person name="Ozersky P."/>
            <person name="Armstrong J.R."/>
            <person name="Fulton R.S."/>
            <person name="Latreille J.P."/>
            <person name="Spieth J."/>
            <person name="Hooton T.M."/>
            <person name="Mardis E.R."/>
            <person name="Hultgren S.J."/>
            <person name="Gordon J.I."/>
        </authorList>
    </citation>
    <scope>NUCLEOTIDE SEQUENCE [LARGE SCALE GENOMIC DNA]</scope>
    <source>
        <strain>UTI89 / UPEC</strain>
    </source>
</reference>
<accession>Q1R314</accession>